<reference key="1">
    <citation type="submission" date="2007-05" db="EMBL/GenBank/DDBJ databases">
        <title>Complete sequence of Thermosipho melanesiensis BI429.</title>
        <authorList>
            <consortium name="US DOE Joint Genome Institute"/>
            <person name="Copeland A."/>
            <person name="Lucas S."/>
            <person name="Lapidus A."/>
            <person name="Barry K."/>
            <person name="Glavina del Rio T."/>
            <person name="Dalin E."/>
            <person name="Tice H."/>
            <person name="Pitluck S."/>
            <person name="Chertkov O."/>
            <person name="Brettin T."/>
            <person name="Bruce D."/>
            <person name="Detter J.C."/>
            <person name="Han C."/>
            <person name="Schmutz J."/>
            <person name="Larimer F."/>
            <person name="Land M."/>
            <person name="Hauser L."/>
            <person name="Kyrpides N."/>
            <person name="Mikhailova N."/>
            <person name="Nelson K."/>
            <person name="Gogarten J.P."/>
            <person name="Noll K."/>
            <person name="Richardson P."/>
        </authorList>
    </citation>
    <scope>NUCLEOTIDE SEQUENCE [LARGE SCALE GENOMIC DNA]</scope>
    <source>
        <strain>DSM 12029 / CIP 104789 / BI429</strain>
    </source>
</reference>
<sequence>MMGSTFKRKISKVTVKVASPEVIRSWSSGEVKKPETINYRTFKPEKDGLFCEKIFGPTKDYECACGKYKGKKYEGTVCERCGVRVESKEARRKRMGHIDLFAPVVHVWYLKSSPSILSSLLGIQAKELENVIYYGGKRIIEKILIVTNPKDTDFIKGSLLYQTEYEIYNQKLDFEVMPGVIIKSPVAPVISSISGEVKIRHEKTHTDREITWVDVRKISRAEHRVYNGMVLNVKNGDYVNQGDEIVSEMQIDPIYAPFDGTVEIDEISNTITIKPLTTSKDMPVTFSLPYGVKPVVPNNSKVKKGDQLTNGTVLPAVIASVSGNISFGKELNVRPLEDGKYEVLTSGSVYVENVVEEKHYPLFEGAFVYVKDGDEISEGQTIADRFLFEDEYLTLDEYKIFEQHYPAMFTAESEVENDRPIVVITEIDDEVSVETGLKIGDIITDHQYSAYRTLYNDKIEADSGASAIKKLLQKLDLEKLKAEIESELKKVSKSSGRAKKLLRRLKIVKDLLKSETKPEWMILEAIPVVPPDIRPMIQVEGGRFATTDLNDLYRRVINRNNRLKKLYEMNSPEIIIKNEKRMLQEAVDSLIYNGRMGKAVTDRNGRALKSLTDLLKGKKGRFRRNLLGKRVDYSGRAVIVVGPHLKIHECGLPKKMAMELFKPFVLAELLNKDDETSKTARKMKKAIIEKEMPQAYEVLEEIIKGHPVLLNRAPTLHRMSLQAFEPKLIEGNAIQLHPLVCPPFNADFDGDQMAVHVPLSAAAQAEAKFLMLSRYNIISPAHGKPISMPGKDIVAGVYYLTMVGKDYDKVQKENIKWKFSSIDEAELAYEFGHIRLHDPILVKVDDRVIKTTYGRLVFANIVPREFRDYNKTYGKGAIKDLVYKTFKKYGVDRTADLLDDIKDLGFHYATISGLTVSITDFYISPERRRIIDEAKKKISEVEELFALGFLSDEERYRETIKIWADATEKVQDATFEYIGKDPFNPVYIMVDSGARGNKDQLKQLAGMRGLMADPSGRTIEIPIISNFREGLSVLEFFISTHGARKGSADTALRTSSAGYLTRRLVDVAQSVVITTTDCGTENGVRATVLKSSDGLTVEKLEDFLFGRVLAKDVYDPKTNSVLVNPENGKEYTRDTMIDDDDAKFLGNYSVRIPVSRELEINLTNPELPENYCELITDFIYDGVHYDEGTEVNWDIIRKAKNSGLEKLTVKEYPIVGKVSVETVVSQKDIKQLVVDEELIMPTTAKILEGHNVESVQVRPEIIVRSVLTCEAEHGVCSKCYGMDLSNHKIIGVGEAVGVVAAQSIGEPGTQLTMRTFHTGGIATTADITQGLPRAEELFEARKKLKEPEGIFSRVKGYVKDIVEDETGKKKVYIEDEAGDIHEYDIPTKVKVSVNKGQKILPGQSLSTGAIRPRKILETLDVDTTALYLLKEIKKVYVEQGVDIHDKHFEIIIKQMLDKVEVIDPGDTDYLPGDLLRLQMVKRINKQILEENVHVETNRKRVIGKILHQHLIAEDENGEIVEIAPEGVEVTEEILEKAIKSGIKEIIVKNGDGEIVTYQILPKEPIKYRRRLLRITKASLERVGWLSAASFQQTPQVLTEAAIEGSVDHLLGLKENVIVGQLIPAGTGLDMFANIQIEETPRLAQKEKMA</sequence>
<gene>
    <name evidence="1" type="primary">rpoC</name>
    <name type="ordered locus">Tmel_0501</name>
</gene>
<comment type="function">
    <text evidence="1">DNA-dependent RNA polymerase catalyzes the transcription of DNA into RNA using the four ribonucleoside triphosphates as substrates.</text>
</comment>
<comment type="catalytic activity">
    <reaction evidence="1">
        <text>RNA(n) + a ribonucleoside 5'-triphosphate = RNA(n+1) + diphosphate</text>
        <dbReference type="Rhea" id="RHEA:21248"/>
        <dbReference type="Rhea" id="RHEA-COMP:14527"/>
        <dbReference type="Rhea" id="RHEA-COMP:17342"/>
        <dbReference type="ChEBI" id="CHEBI:33019"/>
        <dbReference type="ChEBI" id="CHEBI:61557"/>
        <dbReference type="ChEBI" id="CHEBI:140395"/>
        <dbReference type="EC" id="2.7.7.6"/>
    </reaction>
</comment>
<comment type="cofactor">
    <cofactor evidence="1">
        <name>Mg(2+)</name>
        <dbReference type="ChEBI" id="CHEBI:18420"/>
    </cofactor>
    <text evidence="1">Binds 1 Mg(2+) ion per subunit.</text>
</comment>
<comment type="cofactor">
    <cofactor evidence="1">
        <name>Zn(2+)</name>
        <dbReference type="ChEBI" id="CHEBI:29105"/>
    </cofactor>
    <text evidence="1">Binds 2 Zn(2+) ions per subunit.</text>
</comment>
<comment type="subunit">
    <text evidence="1">The RNAP catalytic core consists of 2 alpha, 1 beta, 1 beta' and 1 omega subunit. When a sigma factor is associated with the core the holoenzyme is formed, which can initiate transcription.</text>
</comment>
<comment type="similarity">
    <text evidence="1">Belongs to the RNA polymerase beta' chain family.</text>
</comment>
<evidence type="ECO:0000255" key="1">
    <source>
        <dbReference type="HAMAP-Rule" id="MF_01322"/>
    </source>
</evidence>
<proteinExistence type="inferred from homology"/>
<dbReference type="EC" id="2.7.7.6" evidence="1"/>
<dbReference type="EMBL" id="CP000716">
    <property type="protein sequence ID" value="ABR30368.1"/>
    <property type="molecule type" value="Genomic_DNA"/>
</dbReference>
<dbReference type="RefSeq" id="WP_012056729.1">
    <property type="nucleotide sequence ID" value="NC_009616.1"/>
</dbReference>
<dbReference type="SMR" id="A6LKB7"/>
<dbReference type="STRING" id="391009.Tmel_0501"/>
<dbReference type="KEGG" id="tme:Tmel_0501"/>
<dbReference type="eggNOG" id="COG0086">
    <property type="taxonomic scope" value="Bacteria"/>
</dbReference>
<dbReference type="HOGENOM" id="CLU_000524_3_1_0"/>
<dbReference type="OrthoDB" id="9815296at2"/>
<dbReference type="Proteomes" id="UP000001110">
    <property type="component" value="Chromosome"/>
</dbReference>
<dbReference type="GO" id="GO:0000428">
    <property type="term" value="C:DNA-directed RNA polymerase complex"/>
    <property type="evidence" value="ECO:0007669"/>
    <property type="project" value="UniProtKB-KW"/>
</dbReference>
<dbReference type="GO" id="GO:0003677">
    <property type="term" value="F:DNA binding"/>
    <property type="evidence" value="ECO:0007669"/>
    <property type="project" value="UniProtKB-UniRule"/>
</dbReference>
<dbReference type="GO" id="GO:0003899">
    <property type="term" value="F:DNA-directed RNA polymerase activity"/>
    <property type="evidence" value="ECO:0007669"/>
    <property type="project" value="UniProtKB-UniRule"/>
</dbReference>
<dbReference type="GO" id="GO:0000287">
    <property type="term" value="F:magnesium ion binding"/>
    <property type="evidence" value="ECO:0007669"/>
    <property type="project" value="UniProtKB-UniRule"/>
</dbReference>
<dbReference type="GO" id="GO:0008270">
    <property type="term" value="F:zinc ion binding"/>
    <property type="evidence" value="ECO:0007669"/>
    <property type="project" value="UniProtKB-UniRule"/>
</dbReference>
<dbReference type="GO" id="GO:0006351">
    <property type="term" value="P:DNA-templated transcription"/>
    <property type="evidence" value="ECO:0007669"/>
    <property type="project" value="UniProtKB-UniRule"/>
</dbReference>
<dbReference type="CDD" id="cd02655">
    <property type="entry name" value="RNAP_beta'_C"/>
    <property type="match status" value="1"/>
</dbReference>
<dbReference type="CDD" id="cd01609">
    <property type="entry name" value="RNAP_beta'_N"/>
    <property type="match status" value="1"/>
</dbReference>
<dbReference type="Gene3D" id="1.10.132.30">
    <property type="match status" value="1"/>
</dbReference>
<dbReference type="Gene3D" id="1.10.150.390">
    <property type="match status" value="1"/>
</dbReference>
<dbReference type="Gene3D" id="1.10.1790.20">
    <property type="match status" value="1"/>
</dbReference>
<dbReference type="Gene3D" id="1.10.40.90">
    <property type="match status" value="1"/>
</dbReference>
<dbReference type="Gene3D" id="2.40.40.20">
    <property type="match status" value="1"/>
</dbReference>
<dbReference type="Gene3D" id="2.40.50.100">
    <property type="match status" value="4"/>
</dbReference>
<dbReference type="Gene3D" id="4.10.860.120">
    <property type="entry name" value="RNA polymerase II, clamp domain"/>
    <property type="match status" value="1"/>
</dbReference>
<dbReference type="Gene3D" id="1.10.274.100">
    <property type="entry name" value="RNA polymerase Rpb1, domain 3"/>
    <property type="match status" value="2"/>
</dbReference>
<dbReference type="HAMAP" id="MF_01322">
    <property type="entry name" value="RNApol_bact_RpoC"/>
    <property type="match status" value="1"/>
</dbReference>
<dbReference type="InterPro" id="IPR045867">
    <property type="entry name" value="DNA-dir_RpoC_beta_prime"/>
</dbReference>
<dbReference type="InterPro" id="IPR012754">
    <property type="entry name" value="DNA-dir_RpoC_beta_prime_bact"/>
</dbReference>
<dbReference type="InterPro" id="IPR000722">
    <property type="entry name" value="RNA_pol_asu"/>
</dbReference>
<dbReference type="InterPro" id="IPR006592">
    <property type="entry name" value="RNA_pol_N"/>
</dbReference>
<dbReference type="InterPro" id="IPR007080">
    <property type="entry name" value="RNA_pol_Rpb1_1"/>
</dbReference>
<dbReference type="InterPro" id="IPR007066">
    <property type="entry name" value="RNA_pol_Rpb1_3"/>
</dbReference>
<dbReference type="InterPro" id="IPR042102">
    <property type="entry name" value="RNA_pol_Rpb1_3_sf"/>
</dbReference>
<dbReference type="InterPro" id="IPR007083">
    <property type="entry name" value="RNA_pol_Rpb1_4"/>
</dbReference>
<dbReference type="InterPro" id="IPR007081">
    <property type="entry name" value="RNA_pol_Rpb1_5"/>
</dbReference>
<dbReference type="InterPro" id="IPR044893">
    <property type="entry name" value="RNA_pol_Rpb1_clamp_domain"/>
</dbReference>
<dbReference type="InterPro" id="IPR038120">
    <property type="entry name" value="Rpb1_funnel_sf"/>
</dbReference>
<dbReference type="PANTHER" id="PTHR19376">
    <property type="entry name" value="DNA-DIRECTED RNA POLYMERASE"/>
    <property type="match status" value="1"/>
</dbReference>
<dbReference type="PANTHER" id="PTHR19376:SF54">
    <property type="entry name" value="DNA-DIRECTED RNA POLYMERASE SUBUNIT BETA"/>
    <property type="match status" value="1"/>
</dbReference>
<dbReference type="Pfam" id="PF04997">
    <property type="entry name" value="RNA_pol_Rpb1_1"/>
    <property type="match status" value="2"/>
</dbReference>
<dbReference type="Pfam" id="PF00623">
    <property type="entry name" value="RNA_pol_Rpb1_2"/>
    <property type="match status" value="2"/>
</dbReference>
<dbReference type="Pfam" id="PF04983">
    <property type="entry name" value="RNA_pol_Rpb1_3"/>
    <property type="match status" value="1"/>
</dbReference>
<dbReference type="Pfam" id="PF05000">
    <property type="entry name" value="RNA_pol_Rpb1_4"/>
    <property type="match status" value="1"/>
</dbReference>
<dbReference type="Pfam" id="PF04998">
    <property type="entry name" value="RNA_pol_Rpb1_5"/>
    <property type="match status" value="1"/>
</dbReference>
<dbReference type="SMART" id="SM00663">
    <property type="entry name" value="RPOLA_N"/>
    <property type="match status" value="1"/>
</dbReference>
<dbReference type="SUPFAM" id="SSF64484">
    <property type="entry name" value="beta and beta-prime subunits of DNA dependent RNA-polymerase"/>
    <property type="match status" value="1"/>
</dbReference>
<feature type="chain" id="PRO_0000353448" description="DNA-directed RNA polymerase subunit beta'">
    <location>
        <begin position="1"/>
        <end position="1649"/>
    </location>
</feature>
<feature type="binding site" evidence="1">
    <location>
        <position position="63"/>
    </location>
    <ligand>
        <name>Zn(2+)</name>
        <dbReference type="ChEBI" id="CHEBI:29105"/>
        <label>1</label>
    </ligand>
</feature>
<feature type="binding site" evidence="1">
    <location>
        <position position="65"/>
    </location>
    <ligand>
        <name>Zn(2+)</name>
        <dbReference type="ChEBI" id="CHEBI:29105"/>
        <label>1</label>
    </ligand>
</feature>
<feature type="binding site" evidence="1">
    <location>
        <position position="78"/>
    </location>
    <ligand>
        <name>Zn(2+)</name>
        <dbReference type="ChEBI" id="CHEBI:29105"/>
        <label>1</label>
    </ligand>
</feature>
<feature type="binding site" evidence="1">
    <location>
        <position position="81"/>
    </location>
    <ligand>
        <name>Zn(2+)</name>
        <dbReference type="ChEBI" id="CHEBI:29105"/>
        <label>1</label>
    </ligand>
</feature>
<feature type="binding site" evidence="1">
    <location>
        <position position="747"/>
    </location>
    <ligand>
        <name>Mg(2+)</name>
        <dbReference type="ChEBI" id="CHEBI:18420"/>
    </ligand>
</feature>
<feature type="binding site" evidence="1">
    <location>
        <position position="749"/>
    </location>
    <ligand>
        <name>Mg(2+)</name>
        <dbReference type="ChEBI" id="CHEBI:18420"/>
    </ligand>
</feature>
<feature type="binding site" evidence="1">
    <location>
        <position position="751"/>
    </location>
    <ligand>
        <name>Mg(2+)</name>
        <dbReference type="ChEBI" id="CHEBI:18420"/>
    </ligand>
</feature>
<feature type="binding site" evidence="1">
    <location>
        <position position="1078"/>
    </location>
    <ligand>
        <name>Zn(2+)</name>
        <dbReference type="ChEBI" id="CHEBI:29105"/>
        <label>2</label>
    </ligand>
</feature>
<feature type="binding site" evidence="1">
    <location>
        <position position="1269"/>
    </location>
    <ligand>
        <name>Zn(2+)</name>
        <dbReference type="ChEBI" id="CHEBI:29105"/>
        <label>2</label>
    </ligand>
</feature>
<feature type="binding site" evidence="1">
    <location>
        <position position="1276"/>
    </location>
    <ligand>
        <name>Zn(2+)</name>
        <dbReference type="ChEBI" id="CHEBI:29105"/>
        <label>2</label>
    </ligand>
</feature>
<feature type="binding site" evidence="1">
    <location>
        <position position="1279"/>
    </location>
    <ligand>
        <name>Zn(2+)</name>
        <dbReference type="ChEBI" id="CHEBI:29105"/>
        <label>2</label>
    </ligand>
</feature>
<keyword id="KW-0240">DNA-directed RNA polymerase</keyword>
<keyword id="KW-0460">Magnesium</keyword>
<keyword id="KW-0479">Metal-binding</keyword>
<keyword id="KW-0548">Nucleotidyltransferase</keyword>
<keyword id="KW-0804">Transcription</keyword>
<keyword id="KW-0808">Transferase</keyword>
<keyword id="KW-0862">Zinc</keyword>
<name>RPOC_THEM4</name>
<accession>A6LKB7</accession>
<protein>
    <recommendedName>
        <fullName evidence="1">DNA-directed RNA polymerase subunit beta'</fullName>
        <shortName evidence="1">RNAP subunit beta'</shortName>
        <ecNumber evidence="1">2.7.7.6</ecNumber>
    </recommendedName>
    <alternativeName>
        <fullName evidence="1">RNA polymerase subunit beta'</fullName>
    </alternativeName>
    <alternativeName>
        <fullName evidence="1">Transcriptase subunit beta'</fullName>
    </alternativeName>
</protein>
<organism>
    <name type="scientific">Thermosipho melanesiensis (strain DSM 12029 / CIP 104789 / BI429)</name>
    <dbReference type="NCBI Taxonomy" id="391009"/>
    <lineage>
        <taxon>Bacteria</taxon>
        <taxon>Thermotogati</taxon>
        <taxon>Thermotogota</taxon>
        <taxon>Thermotogae</taxon>
        <taxon>Thermotogales</taxon>
        <taxon>Fervidobacteriaceae</taxon>
        <taxon>Thermosipho</taxon>
    </lineage>
</organism>